<gene>
    <name evidence="1" type="primary">frr</name>
    <name type="ordered locus">SRU_0033</name>
</gene>
<proteinExistence type="inferred from homology"/>
<keyword id="KW-0963">Cytoplasm</keyword>
<keyword id="KW-0648">Protein biosynthesis</keyword>
<keyword id="KW-1185">Reference proteome</keyword>
<comment type="function">
    <text evidence="1">Responsible for the release of ribosomes from messenger RNA at the termination of protein biosynthesis. May increase the efficiency of translation by recycling ribosomes from one round of translation to another.</text>
</comment>
<comment type="subcellular location">
    <subcellularLocation>
        <location evidence="1">Cytoplasm</location>
    </subcellularLocation>
</comment>
<comment type="similarity">
    <text evidence="1">Belongs to the RRF family.</text>
</comment>
<dbReference type="EMBL" id="CP000159">
    <property type="protein sequence ID" value="ABC45614.1"/>
    <property type="molecule type" value="Genomic_DNA"/>
</dbReference>
<dbReference type="RefSeq" id="WP_011402821.1">
    <property type="nucleotide sequence ID" value="NC_007677.1"/>
</dbReference>
<dbReference type="RefSeq" id="YP_444188.1">
    <property type="nucleotide sequence ID" value="NC_007677.1"/>
</dbReference>
<dbReference type="SMR" id="Q2S6J3"/>
<dbReference type="STRING" id="309807.SRU_0033"/>
<dbReference type="EnsemblBacteria" id="ABC45614">
    <property type="protein sequence ID" value="ABC45614"/>
    <property type="gene ID" value="SRU_0033"/>
</dbReference>
<dbReference type="GeneID" id="83726863"/>
<dbReference type="KEGG" id="sru:SRU_0033"/>
<dbReference type="PATRIC" id="fig|309807.25.peg.30"/>
<dbReference type="eggNOG" id="COG0233">
    <property type="taxonomic scope" value="Bacteria"/>
</dbReference>
<dbReference type="HOGENOM" id="CLU_073981_2_0_10"/>
<dbReference type="OrthoDB" id="9804006at2"/>
<dbReference type="Proteomes" id="UP000008674">
    <property type="component" value="Chromosome"/>
</dbReference>
<dbReference type="GO" id="GO:0005737">
    <property type="term" value="C:cytoplasm"/>
    <property type="evidence" value="ECO:0007669"/>
    <property type="project" value="UniProtKB-SubCell"/>
</dbReference>
<dbReference type="GO" id="GO:0043023">
    <property type="term" value="F:ribosomal large subunit binding"/>
    <property type="evidence" value="ECO:0007669"/>
    <property type="project" value="TreeGrafter"/>
</dbReference>
<dbReference type="GO" id="GO:0006415">
    <property type="term" value="P:translational termination"/>
    <property type="evidence" value="ECO:0007669"/>
    <property type="project" value="UniProtKB-UniRule"/>
</dbReference>
<dbReference type="CDD" id="cd00520">
    <property type="entry name" value="RRF"/>
    <property type="match status" value="1"/>
</dbReference>
<dbReference type="FunFam" id="3.30.1360.40:FF:000001">
    <property type="entry name" value="Ribosome-recycling factor"/>
    <property type="match status" value="1"/>
</dbReference>
<dbReference type="Gene3D" id="3.30.1360.40">
    <property type="match status" value="1"/>
</dbReference>
<dbReference type="Gene3D" id="1.10.132.20">
    <property type="entry name" value="Ribosome-recycling factor"/>
    <property type="match status" value="1"/>
</dbReference>
<dbReference type="HAMAP" id="MF_00040">
    <property type="entry name" value="RRF"/>
    <property type="match status" value="1"/>
</dbReference>
<dbReference type="InterPro" id="IPR002661">
    <property type="entry name" value="Ribosome_recyc_fac"/>
</dbReference>
<dbReference type="InterPro" id="IPR023584">
    <property type="entry name" value="Ribosome_recyc_fac_dom"/>
</dbReference>
<dbReference type="InterPro" id="IPR036191">
    <property type="entry name" value="RRF_sf"/>
</dbReference>
<dbReference type="NCBIfam" id="TIGR00496">
    <property type="entry name" value="frr"/>
    <property type="match status" value="1"/>
</dbReference>
<dbReference type="PANTHER" id="PTHR20982:SF3">
    <property type="entry name" value="MITOCHONDRIAL RIBOSOME RECYCLING FACTOR PSEUDO 1"/>
    <property type="match status" value="1"/>
</dbReference>
<dbReference type="PANTHER" id="PTHR20982">
    <property type="entry name" value="RIBOSOME RECYCLING FACTOR"/>
    <property type="match status" value="1"/>
</dbReference>
<dbReference type="Pfam" id="PF01765">
    <property type="entry name" value="RRF"/>
    <property type="match status" value="1"/>
</dbReference>
<dbReference type="SUPFAM" id="SSF55194">
    <property type="entry name" value="Ribosome recycling factor, RRF"/>
    <property type="match status" value="1"/>
</dbReference>
<sequence>MPDDPIQDILDEADEEMEESVSYMRSELRTIRAGRASPAMLENVTVEYYGSQTPLEQVASVSAPQPDLIVVQPFDRNAIENIERGIMKADLGLNPNNDGEKIRIPIPPLSEERRKELVETSRERAEETKISIRNIRRDAKNEIQNVVEAENFSEDVLYGAEEDLQDITDAHTETVEGLLEQKTEQIMDV</sequence>
<evidence type="ECO:0000255" key="1">
    <source>
        <dbReference type="HAMAP-Rule" id="MF_00040"/>
    </source>
</evidence>
<accession>Q2S6J3</accession>
<protein>
    <recommendedName>
        <fullName evidence="1">Ribosome-recycling factor</fullName>
        <shortName evidence="1">RRF</shortName>
    </recommendedName>
    <alternativeName>
        <fullName evidence="1">Ribosome-releasing factor</fullName>
    </alternativeName>
</protein>
<reference key="1">
    <citation type="journal article" date="2005" name="Proc. Natl. Acad. Sci. U.S.A.">
        <title>The genome of Salinibacter ruber: convergence and gene exchange among hyperhalophilic bacteria and archaea.</title>
        <authorList>
            <person name="Mongodin E.F."/>
            <person name="Nelson K.E."/>
            <person name="Daugherty S."/>
            <person name="DeBoy R.T."/>
            <person name="Wister J."/>
            <person name="Khouri H."/>
            <person name="Weidman J."/>
            <person name="Walsh D.A."/>
            <person name="Papke R.T."/>
            <person name="Sanchez Perez G."/>
            <person name="Sharma A.K."/>
            <person name="Nesbo C.L."/>
            <person name="MacLeod D."/>
            <person name="Bapteste E."/>
            <person name="Doolittle W.F."/>
            <person name="Charlebois R.L."/>
            <person name="Legault B."/>
            <person name="Rodriguez-Valera F."/>
        </authorList>
    </citation>
    <scope>NUCLEOTIDE SEQUENCE [LARGE SCALE GENOMIC DNA]</scope>
    <source>
        <strain>DSM 13855 / CECT 5946 / M31</strain>
    </source>
</reference>
<name>RRF_SALRD</name>
<feature type="chain" id="PRO_0000341040" description="Ribosome-recycling factor">
    <location>
        <begin position="1"/>
        <end position="189"/>
    </location>
</feature>
<organism>
    <name type="scientific">Salinibacter ruber (strain DSM 13855 / M31)</name>
    <dbReference type="NCBI Taxonomy" id="309807"/>
    <lineage>
        <taxon>Bacteria</taxon>
        <taxon>Pseudomonadati</taxon>
        <taxon>Rhodothermota</taxon>
        <taxon>Rhodothermia</taxon>
        <taxon>Rhodothermales</taxon>
        <taxon>Salinibacteraceae</taxon>
        <taxon>Salinibacter</taxon>
    </lineage>
</organism>